<organism>
    <name type="scientific">Escherichia coli O157:H7</name>
    <dbReference type="NCBI Taxonomy" id="83334"/>
    <lineage>
        <taxon>Bacteria</taxon>
        <taxon>Pseudomonadati</taxon>
        <taxon>Pseudomonadota</taxon>
        <taxon>Gammaproteobacteria</taxon>
        <taxon>Enterobacterales</taxon>
        <taxon>Enterobacteriaceae</taxon>
        <taxon>Escherichia</taxon>
    </lineage>
</organism>
<evidence type="ECO:0000250" key="1">
    <source>
        <dbReference type="UniProtKB" id="P69937"/>
    </source>
</evidence>
<evidence type="ECO:0000255" key="2"/>
<evidence type="ECO:0000305" key="3"/>
<keyword id="KW-0997">Cell inner membrane</keyword>
<keyword id="KW-1003">Cell membrane</keyword>
<keyword id="KW-0406">Ion transport</keyword>
<keyword id="KW-0472">Membrane</keyword>
<keyword id="KW-1185">Reference proteome</keyword>
<keyword id="KW-0812">Transmembrane</keyword>
<keyword id="KW-1133">Transmembrane helix</keyword>
<keyword id="KW-0813">Transport</keyword>
<comment type="function">
    <text evidence="1">Guanidinium ion exporter. Couples guanidinium export to the proton motive force, exchanging one guanidinium ion for two protons.</text>
</comment>
<comment type="subcellular location">
    <subcellularLocation>
        <location evidence="1">Cell inner membrane</location>
        <topology evidence="1">Multi-pass membrane protein</topology>
    </subcellularLocation>
</comment>
<comment type="similarity">
    <text evidence="3">Belongs to the drug/metabolite transporter (DMT) superfamily. Small multidrug resistance (SMR) (TC 2.A.7.1) family. Gdx/SugE subfamily.</text>
</comment>
<comment type="sequence caution" evidence="3">
    <conflict type="erroneous initiation">
        <sequence resource="EMBL-CDS" id="AAG59349"/>
    </conflict>
    <text>Extended N-terminus.</text>
</comment>
<gene>
    <name evidence="1" type="primary">gdx</name>
    <name type="synonym">sugE</name>
    <name type="ordered locus">Z5755</name>
    <name type="ordered locus">ECs5129</name>
</gene>
<sequence>MSWIILVIAGLLEVVWAVGLKYTHGFSRLTPSVITVTAMIVSMALLAWAMKSLPVGTAYAVWTGIGAVGAAITGIVLLGESANPMRLASLALIVLGIIGLKLSTH</sequence>
<feature type="chain" id="PRO_0000108098" description="Guanidinium exporter">
    <location>
        <begin position="1"/>
        <end position="105"/>
    </location>
</feature>
<feature type="transmembrane region" description="Helical" evidence="2">
    <location>
        <begin position="1"/>
        <end position="21"/>
    </location>
</feature>
<feature type="topological domain" description="Cytoplasmic" evidence="2">
    <location>
        <begin position="22"/>
        <end position="28"/>
    </location>
</feature>
<feature type="transmembrane region" description="Helical" evidence="2">
    <location>
        <begin position="29"/>
        <end position="49"/>
    </location>
</feature>
<feature type="topological domain" description="Periplasmic" evidence="2">
    <location>
        <begin position="50"/>
        <end position="57"/>
    </location>
</feature>
<feature type="transmembrane region" description="Helical" evidence="2">
    <location>
        <begin position="58"/>
        <end position="78"/>
    </location>
</feature>
<feature type="topological domain" description="Cytoplasmic" evidence="2">
    <location>
        <begin position="79"/>
        <end position="81"/>
    </location>
</feature>
<feature type="transmembrane region" description="Helical" evidence="2">
    <location>
        <begin position="82"/>
        <end position="102"/>
    </location>
</feature>
<feature type="topological domain" description="Periplasmic" evidence="2">
    <location>
        <begin position="103"/>
        <end position="105"/>
    </location>
</feature>
<dbReference type="EMBL" id="AE005174">
    <property type="protein sequence ID" value="AAG59349.1"/>
    <property type="status" value="ALT_INIT"/>
    <property type="molecule type" value="Genomic_DNA"/>
</dbReference>
<dbReference type="EMBL" id="BA000007">
    <property type="protein sequence ID" value="BAB38552.2"/>
    <property type="molecule type" value="Genomic_DNA"/>
</dbReference>
<dbReference type="PIR" id="A86111">
    <property type="entry name" value="A86111"/>
</dbReference>
<dbReference type="PIR" id="A98270">
    <property type="entry name" value="A98270"/>
</dbReference>
<dbReference type="RefSeq" id="NP_313156.1">
    <property type="nucleotide sequence ID" value="NC_002695.1"/>
</dbReference>
<dbReference type="RefSeq" id="WP_000118482.1">
    <property type="nucleotide sequence ID" value="NZ_VOAI01000008.1"/>
</dbReference>
<dbReference type="SMR" id="Q8XDQ5"/>
<dbReference type="STRING" id="155864.Z5755"/>
<dbReference type="DNASU" id="913177"/>
<dbReference type="GeneID" id="913177"/>
<dbReference type="GeneID" id="93777674"/>
<dbReference type="KEGG" id="ece:Z5755"/>
<dbReference type="KEGG" id="ecs:ECs_5129"/>
<dbReference type="PATRIC" id="fig|386585.9.peg.5362"/>
<dbReference type="eggNOG" id="COG2076">
    <property type="taxonomic scope" value="Bacteria"/>
</dbReference>
<dbReference type="HOGENOM" id="CLU_133067_1_1_6"/>
<dbReference type="OMA" id="CLWMAQK"/>
<dbReference type="Proteomes" id="UP000000558">
    <property type="component" value="Chromosome"/>
</dbReference>
<dbReference type="Proteomes" id="UP000002519">
    <property type="component" value="Chromosome"/>
</dbReference>
<dbReference type="GO" id="GO:0005886">
    <property type="term" value="C:plasma membrane"/>
    <property type="evidence" value="ECO:0007669"/>
    <property type="project" value="UniProtKB-SubCell"/>
</dbReference>
<dbReference type="GO" id="GO:0022857">
    <property type="term" value="F:transmembrane transporter activity"/>
    <property type="evidence" value="ECO:0007669"/>
    <property type="project" value="InterPro"/>
</dbReference>
<dbReference type="GO" id="GO:0006811">
    <property type="term" value="P:monoatomic ion transport"/>
    <property type="evidence" value="ECO:0007669"/>
    <property type="project" value="UniProtKB-KW"/>
</dbReference>
<dbReference type="FunFam" id="1.10.3730.20:FF:000001">
    <property type="entry name" value="Quaternary ammonium compound resistance transporter SugE"/>
    <property type="match status" value="1"/>
</dbReference>
<dbReference type="Gene3D" id="1.10.3730.20">
    <property type="match status" value="1"/>
</dbReference>
<dbReference type="InterPro" id="IPR000390">
    <property type="entry name" value="Small_drug/metabolite_transptr"/>
</dbReference>
<dbReference type="InterPro" id="IPR045324">
    <property type="entry name" value="Small_multidrug_res"/>
</dbReference>
<dbReference type="NCBIfam" id="NF008512">
    <property type="entry name" value="PRK11431.1"/>
    <property type="match status" value="1"/>
</dbReference>
<dbReference type="PANTHER" id="PTHR30561:SF0">
    <property type="entry name" value="GUANIDINIUM EXPORTER"/>
    <property type="match status" value="1"/>
</dbReference>
<dbReference type="PANTHER" id="PTHR30561">
    <property type="entry name" value="SMR FAMILY PROTON-DEPENDENT DRUG EFFLUX TRANSPORTER SUGE"/>
    <property type="match status" value="1"/>
</dbReference>
<dbReference type="Pfam" id="PF00893">
    <property type="entry name" value="Multi_Drug_Res"/>
    <property type="match status" value="1"/>
</dbReference>
<dbReference type="SUPFAM" id="SSF103481">
    <property type="entry name" value="Multidrug resistance efflux transporter EmrE"/>
    <property type="match status" value="1"/>
</dbReference>
<protein>
    <recommendedName>
        <fullName evidence="1">Guanidinium exporter</fullName>
    </recommendedName>
</protein>
<proteinExistence type="inferred from homology"/>
<accession>Q8XDQ5</accession>
<accession>Q7A8W6</accession>
<name>GDX_ECO57</name>
<reference key="1">
    <citation type="journal article" date="2001" name="Nature">
        <title>Genome sequence of enterohaemorrhagic Escherichia coli O157:H7.</title>
        <authorList>
            <person name="Perna N.T."/>
            <person name="Plunkett G. III"/>
            <person name="Burland V."/>
            <person name="Mau B."/>
            <person name="Glasner J.D."/>
            <person name="Rose D.J."/>
            <person name="Mayhew G.F."/>
            <person name="Evans P.S."/>
            <person name="Gregor J."/>
            <person name="Kirkpatrick H.A."/>
            <person name="Posfai G."/>
            <person name="Hackett J."/>
            <person name="Klink S."/>
            <person name="Boutin A."/>
            <person name="Shao Y."/>
            <person name="Miller L."/>
            <person name="Grotbeck E.J."/>
            <person name="Davis N.W."/>
            <person name="Lim A."/>
            <person name="Dimalanta E.T."/>
            <person name="Potamousis K."/>
            <person name="Apodaca J."/>
            <person name="Anantharaman T.S."/>
            <person name="Lin J."/>
            <person name="Yen G."/>
            <person name="Schwartz D.C."/>
            <person name="Welch R.A."/>
            <person name="Blattner F.R."/>
        </authorList>
    </citation>
    <scope>NUCLEOTIDE SEQUENCE [LARGE SCALE GENOMIC DNA]</scope>
    <source>
        <strain>O157:H7 / EDL933 / ATCC 700927 / EHEC</strain>
    </source>
</reference>
<reference key="2">
    <citation type="journal article" date="2001" name="DNA Res.">
        <title>Complete genome sequence of enterohemorrhagic Escherichia coli O157:H7 and genomic comparison with a laboratory strain K-12.</title>
        <authorList>
            <person name="Hayashi T."/>
            <person name="Makino K."/>
            <person name="Ohnishi M."/>
            <person name="Kurokawa K."/>
            <person name="Ishii K."/>
            <person name="Yokoyama K."/>
            <person name="Han C.-G."/>
            <person name="Ohtsubo E."/>
            <person name="Nakayama K."/>
            <person name="Murata T."/>
            <person name="Tanaka M."/>
            <person name="Tobe T."/>
            <person name="Iida T."/>
            <person name="Takami H."/>
            <person name="Honda T."/>
            <person name="Sasakawa C."/>
            <person name="Ogasawara N."/>
            <person name="Yasunaga T."/>
            <person name="Kuhara S."/>
            <person name="Shiba T."/>
            <person name="Hattori M."/>
            <person name="Shinagawa H."/>
        </authorList>
    </citation>
    <scope>NUCLEOTIDE SEQUENCE [LARGE SCALE GENOMIC DNA]</scope>
    <source>
        <strain>O157:H7 / Sakai / RIMD 0509952 / EHEC</strain>
    </source>
</reference>